<evidence type="ECO:0000255" key="1">
    <source>
        <dbReference type="HAMAP-Rule" id="MF_01576"/>
    </source>
</evidence>
<reference key="1">
    <citation type="submission" date="2008-12" db="EMBL/GenBank/DDBJ databases">
        <title>Complete sequence of chromosome of Shewanella baltica OS223.</title>
        <authorList>
            <consortium name="US DOE Joint Genome Institute"/>
            <person name="Lucas S."/>
            <person name="Copeland A."/>
            <person name="Lapidus A."/>
            <person name="Glavina del Rio T."/>
            <person name="Dalin E."/>
            <person name="Tice H."/>
            <person name="Bruce D."/>
            <person name="Goodwin L."/>
            <person name="Pitluck S."/>
            <person name="Chertkov O."/>
            <person name="Meincke L."/>
            <person name="Brettin T."/>
            <person name="Detter J.C."/>
            <person name="Han C."/>
            <person name="Kuske C.R."/>
            <person name="Larimer F."/>
            <person name="Land M."/>
            <person name="Hauser L."/>
            <person name="Kyrpides N."/>
            <person name="Ovchinnikova G."/>
            <person name="Brettar I."/>
            <person name="Rodrigues J."/>
            <person name="Konstantinidis K."/>
            <person name="Tiedje J."/>
        </authorList>
    </citation>
    <scope>NUCLEOTIDE SEQUENCE [LARGE SCALE GENOMIC DNA]</scope>
    <source>
        <strain>OS223</strain>
    </source>
</reference>
<sequence>MTAQIIDGKAIAQSIRTKLSEKVTARKEAGQRIPGLAVVLVGADPASQVYVGSKRKACEEVGFISRSYDLETSCSEDELLSLIDSLNDDPTIDGILVQLPLPAHIEDSKVIERIRPDKDVDGFHPYNVGRLAQRIPVLRSCTPMGIMTLIKSTGVDTYGLDAVVVGASNIVGRPMTLELLLAGCTTTTCHRFTKNLEQKIRIADLVVVAVGKPGFIPGEWIKPGAIVIDVGINRLDNGTLVGDVQYDVAAQNASFITPVPGGVGPMTIASLLENTLYAAEQYHD</sequence>
<feature type="chain" id="PRO_1000185627" description="Bifunctional protein FolD">
    <location>
        <begin position="1"/>
        <end position="284"/>
    </location>
</feature>
<feature type="binding site" evidence="1">
    <location>
        <begin position="166"/>
        <end position="168"/>
    </location>
    <ligand>
        <name>NADP(+)</name>
        <dbReference type="ChEBI" id="CHEBI:58349"/>
    </ligand>
</feature>
<feature type="binding site" evidence="1">
    <location>
        <position position="232"/>
    </location>
    <ligand>
        <name>NADP(+)</name>
        <dbReference type="ChEBI" id="CHEBI:58349"/>
    </ligand>
</feature>
<comment type="function">
    <text evidence="1">Catalyzes the oxidation of 5,10-methylenetetrahydrofolate to 5,10-methenyltetrahydrofolate and then the hydrolysis of 5,10-methenyltetrahydrofolate to 10-formyltetrahydrofolate.</text>
</comment>
<comment type="catalytic activity">
    <reaction evidence="1">
        <text>(6R)-5,10-methylene-5,6,7,8-tetrahydrofolate + NADP(+) = (6R)-5,10-methenyltetrahydrofolate + NADPH</text>
        <dbReference type="Rhea" id="RHEA:22812"/>
        <dbReference type="ChEBI" id="CHEBI:15636"/>
        <dbReference type="ChEBI" id="CHEBI:57455"/>
        <dbReference type="ChEBI" id="CHEBI:57783"/>
        <dbReference type="ChEBI" id="CHEBI:58349"/>
        <dbReference type="EC" id="1.5.1.5"/>
    </reaction>
</comment>
<comment type="catalytic activity">
    <reaction evidence="1">
        <text>(6R)-5,10-methenyltetrahydrofolate + H2O = (6R)-10-formyltetrahydrofolate + H(+)</text>
        <dbReference type="Rhea" id="RHEA:23700"/>
        <dbReference type="ChEBI" id="CHEBI:15377"/>
        <dbReference type="ChEBI" id="CHEBI:15378"/>
        <dbReference type="ChEBI" id="CHEBI:57455"/>
        <dbReference type="ChEBI" id="CHEBI:195366"/>
        <dbReference type="EC" id="3.5.4.9"/>
    </reaction>
</comment>
<comment type="pathway">
    <text evidence="1">One-carbon metabolism; tetrahydrofolate interconversion.</text>
</comment>
<comment type="subunit">
    <text evidence="1">Homodimer.</text>
</comment>
<comment type="similarity">
    <text evidence="1">Belongs to the tetrahydrofolate dehydrogenase/cyclohydrolase family.</text>
</comment>
<dbReference type="EC" id="1.5.1.5" evidence="1"/>
<dbReference type="EC" id="3.5.4.9" evidence="1"/>
<dbReference type="EMBL" id="CP001252">
    <property type="protein sequence ID" value="ACK47240.1"/>
    <property type="molecule type" value="Genomic_DNA"/>
</dbReference>
<dbReference type="RefSeq" id="WP_011846463.1">
    <property type="nucleotide sequence ID" value="NC_011663.1"/>
</dbReference>
<dbReference type="SMR" id="B8E5F1"/>
<dbReference type="KEGG" id="sbp:Sbal223_2752"/>
<dbReference type="HOGENOM" id="CLU_034045_2_1_6"/>
<dbReference type="UniPathway" id="UPA00193"/>
<dbReference type="Proteomes" id="UP000002507">
    <property type="component" value="Chromosome"/>
</dbReference>
<dbReference type="GO" id="GO:0005829">
    <property type="term" value="C:cytosol"/>
    <property type="evidence" value="ECO:0007669"/>
    <property type="project" value="TreeGrafter"/>
</dbReference>
<dbReference type="GO" id="GO:0004477">
    <property type="term" value="F:methenyltetrahydrofolate cyclohydrolase activity"/>
    <property type="evidence" value="ECO:0007669"/>
    <property type="project" value="UniProtKB-UniRule"/>
</dbReference>
<dbReference type="GO" id="GO:0004488">
    <property type="term" value="F:methylenetetrahydrofolate dehydrogenase (NADP+) activity"/>
    <property type="evidence" value="ECO:0007669"/>
    <property type="project" value="UniProtKB-UniRule"/>
</dbReference>
<dbReference type="GO" id="GO:0000105">
    <property type="term" value="P:L-histidine biosynthetic process"/>
    <property type="evidence" value="ECO:0007669"/>
    <property type="project" value="UniProtKB-KW"/>
</dbReference>
<dbReference type="GO" id="GO:0009086">
    <property type="term" value="P:methionine biosynthetic process"/>
    <property type="evidence" value="ECO:0007669"/>
    <property type="project" value="UniProtKB-KW"/>
</dbReference>
<dbReference type="GO" id="GO:0006164">
    <property type="term" value="P:purine nucleotide biosynthetic process"/>
    <property type="evidence" value="ECO:0007669"/>
    <property type="project" value="UniProtKB-KW"/>
</dbReference>
<dbReference type="GO" id="GO:0035999">
    <property type="term" value="P:tetrahydrofolate interconversion"/>
    <property type="evidence" value="ECO:0007669"/>
    <property type="project" value="UniProtKB-UniRule"/>
</dbReference>
<dbReference type="CDD" id="cd01080">
    <property type="entry name" value="NAD_bind_m-THF_DH_Cyclohyd"/>
    <property type="match status" value="1"/>
</dbReference>
<dbReference type="FunFam" id="3.40.50.10860:FF:000001">
    <property type="entry name" value="Bifunctional protein FolD"/>
    <property type="match status" value="1"/>
</dbReference>
<dbReference type="FunFam" id="3.40.50.720:FF:000006">
    <property type="entry name" value="Bifunctional protein FolD"/>
    <property type="match status" value="1"/>
</dbReference>
<dbReference type="Gene3D" id="3.40.50.10860">
    <property type="entry name" value="Leucine Dehydrogenase, chain A, domain 1"/>
    <property type="match status" value="1"/>
</dbReference>
<dbReference type="Gene3D" id="3.40.50.720">
    <property type="entry name" value="NAD(P)-binding Rossmann-like Domain"/>
    <property type="match status" value="1"/>
</dbReference>
<dbReference type="HAMAP" id="MF_01576">
    <property type="entry name" value="THF_DHG_CYH"/>
    <property type="match status" value="1"/>
</dbReference>
<dbReference type="InterPro" id="IPR046346">
    <property type="entry name" value="Aminoacid_DH-like_N_sf"/>
</dbReference>
<dbReference type="InterPro" id="IPR036291">
    <property type="entry name" value="NAD(P)-bd_dom_sf"/>
</dbReference>
<dbReference type="InterPro" id="IPR000672">
    <property type="entry name" value="THF_DH/CycHdrlase"/>
</dbReference>
<dbReference type="InterPro" id="IPR020630">
    <property type="entry name" value="THF_DH/CycHdrlase_cat_dom"/>
</dbReference>
<dbReference type="InterPro" id="IPR020867">
    <property type="entry name" value="THF_DH/CycHdrlase_CS"/>
</dbReference>
<dbReference type="InterPro" id="IPR020631">
    <property type="entry name" value="THF_DH/CycHdrlase_NAD-bd_dom"/>
</dbReference>
<dbReference type="NCBIfam" id="NF008058">
    <property type="entry name" value="PRK10792.1"/>
    <property type="match status" value="1"/>
</dbReference>
<dbReference type="PANTHER" id="PTHR48099:SF5">
    <property type="entry name" value="C-1-TETRAHYDROFOLATE SYNTHASE, CYTOPLASMIC"/>
    <property type="match status" value="1"/>
</dbReference>
<dbReference type="PANTHER" id="PTHR48099">
    <property type="entry name" value="C-1-TETRAHYDROFOLATE SYNTHASE, CYTOPLASMIC-RELATED"/>
    <property type="match status" value="1"/>
</dbReference>
<dbReference type="Pfam" id="PF00763">
    <property type="entry name" value="THF_DHG_CYH"/>
    <property type="match status" value="1"/>
</dbReference>
<dbReference type="Pfam" id="PF02882">
    <property type="entry name" value="THF_DHG_CYH_C"/>
    <property type="match status" value="1"/>
</dbReference>
<dbReference type="PRINTS" id="PR00085">
    <property type="entry name" value="THFDHDRGNASE"/>
</dbReference>
<dbReference type="SUPFAM" id="SSF53223">
    <property type="entry name" value="Aminoacid dehydrogenase-like, N-terminal domain"/>
    <property type="match status" value="1"/>
</dbReference>
<dbReference type="SUPFAM" id="SSF51735">
    <property type="entry name" value="NAD(P)-binding Rossmann-fold domains"/>
    <property type="match status" value="1"/>
</dbReference>
<dbReference type="PROSITE" id="PS00766">
    <property type="entry name" value="THF_DHG_CYH_1"/>
    <property type="match status" value="1"/>
</dbReference>
<dbReference type="PROSITE" id="PS00767">
    <property type="entry name" value="THF_DHG_CYH_2"/>
    <property type="match status" value="1"/>
</dbReference>
<protein>
    <recommendedName>
        <fullName evidence="1">Bifunctional protein FolD</fullName>
    </recommendedName>
    <domain>
        <recommendedName>
            <fullName evidence="1">Methylenetetrahydrofolate dehydrogenase</fullName>
            <ecNumber evidence="1">1.5.1.5</ecNumber>
        </recommendedName>
    </domain>
    <domain>
        <recommendedName>
            <fullName evidence="1">Methenyltetrahydrofolate cyclohydrolase</fullName>
            <ecNumber evidence="1">3.5.4.9</ecNumber>
        </recommendedName>
    </domain>
</protein>
<name>FOLD_SHEB2</name>
<gene>
    <name evidence="1" type="primary">folD</name>
    <name type="ordered locus">Sbal223_2752</name>
</gene>
<proteinExistence type="inferred from homology"/>
<organism>
    <name type="scientific">Shewanella baltica (strain OS223)</name>
    <dbReference type="NCBI Taxonomy" id="407976"/>
    <lineage>
        <taxon>Bacteria</taxon>
        <taxon>Pseudomonadati</taxon>
        <taxon>Pseudomonadota</taxon>
        <taxon>Gammaproteobacteria</taxon>
        <taxon>Alteromonadales</taxon>
        <taxon>Shewanellaceae</taxon>
        <taxon>Shewanella</taxon>
    </lineage>
</organism>
<keyword id="KW-0028">Amino-acid biosynthesis</keyword>
<keyword id="KW-0368">Histidine biosynthesis</keyword>
<keyword id="KW-0378">Hydrolase</keyword>
<keyword id="KW-0486">Methionine biosynthesis</keyword>
<keyword id="KW-0511">Multifunctional enzyme</keyword>
<keyword id="KW-0521">NADP</keyword>
<keyword id="KW-0554">One-carbon metabolism</keyword>
<keyword id="KW-0560">Oxidoreductase</keyword>
<keyword id="KW-0658">Purine biosynthesis</keyword>
<accession>B8E5F1</accession>